<accession>Q5M6C2</accession>
<sequence length="427" mass="46696">MSVSFENTATNRGVVTFTIGQDKIQPALDQAFNKIKKNLNVPGFRKGHIPRAVFNQKFGEEALYDDALNAILPAAYEAAIAELGLDVVAQPKIDVKSIGKGQDWTLTAEVVTKPEVKLGAYKDLEVSVEVSKEVTDEEVDAKLENERKNLAELIVKDGAAEYGDTVVIDFVGSVDGVEFDGGKGENHSLELGSGQFIPGFEDQLVGAKSGDEVEVKVTFPEDYQATDLAGKAAVFVTKVNEVKAKEVPALDDELAKDLDDEVDTLDELKAKYRKELEAAKEIAFDDAVEGAALDLAVENAEIVELPAEMVENEVHRAMNEFMGNLQRQGISPEMYFQITGTTQEDLRKQYEADSDKRVKTNLVIEAVAAAEGFDATDEEIQKEINDLAAEYNMEVSQVSELLSPEMLKHDIAMKKAVEVITSSAKVK</sequence>
<reference key="1">
    <citation type="journal article" date="2004" name="Nat. Biotechnol.">
        <title>Complete sequence and comparative genome analysis of the dairy bacterium Streptococcus thermophilus.</title>
        <authorList>
            <person name="Bolotin A."/>
            <person name="Quinquis B."/>
            <person name="Renault P."/>
            <person name="Sorokin A."/>
            <person name="Ehrlich S.D."/>
            <person name="Kulakauskas S."/>
            <person name="Lapidus A."/>
            <person name="Goltsman E."/>
            <person name="Mazur M."/>
            <person name="Pusch G.D."/>
            <person name="Fonstein M."/>
            <person name="Overbeek R."/>
            <person name="Kyprides N."/>
            <person name="Purnelle B."/>
            <person name="Prozzi D."/>
            <person name="Ngui K."/>
            <person name="Masuy D."/>
            <person name="Hancy F."/>
            <person name="Burteau S."/>
            <person name="Boutry M."/>
            <person name="Delcour J."/>
            <person name="Goffeau A."/>
            <person name="Hols P."/>
        </authorList>
    </citation>
    <scope>NUCLEOTIDE SEQUENCE [LARGE SCALE GENOMIC DNA]</scope>
    <source>
        <strain>ATCC BAA-250 / LMG 18311</strain>
    </source>
</reference>
<comment type="function">
    <text evidence="1">Involved in protein export. Acts as a chaperone by maintaining the newly synthesized protein in an open conformation. Functions as a peptidyl-prolyl cis-trans isomerase.</text>
</comment>
<comment type="catalytic activity">
    <reaction evidence="1">
        <text>[protein]-peptidylproline (omega=180) = [protein]-peptidylproline (omega=0)</text>
        <dbReference type="Rhea" id="RHEA:16237"/>
        <dbReference type="Rhea" id="RHEA-COMP:10747"/>
        <dbReference type="Rhea" id="RHEA-COMP:10748"/>
        <dbReference type="ChEBI" id="CHEBI:83833"/>
        <dbReference type="ChEBI" id="CHEBI:83834"/>
        <dbReference type="EC" id="5.2.1.8"/>
    </reaction>
</comment>
<comment type="subcellular location">
    <subcellularLocation>
        <location>Cytoplasm</location>
    </subcellularLocation>
    <text evidence="1">About half TF is bound to the ribosome near the polypeptide exit tunnel while the other half is free in the cytoplasm.</text>
</comment>
<comment type="domain">
    <text evidence="1">Consists of 3 domains; the N-terminus binds the ribosome, the middle domain has PPIase activity, while the C-terminus has intrinsic chaperone activity on its own.</text>
</comment>
<comment type="similarity">
    <text evidence="1">Belongs to the FKBP-type PPIase family. Tig subfamily.</text>
</comment>
<proteinExistence type="inferred from homology"/>
<dbReference type="EC" id="5.2.1.8" evidence="1"/>
<dbReference type="EMBL" id="CP000023">
    <property type="protein sequence ID" value="AAV59857.1"/>
    <property type="molecule type" value="Genomic_DNA"/>
</dbReference>
<dbReference type="RefSeq" id="WP_011225339.1">
    <property type="nucleotide sequence ID" value="NC_006448.1"/>
</dbReference>
<dbReference type="SMR" id="Q5M6C2"/>
<dbReference type="STRING" id="264199.stu0132"/>
<dbReference type="GeneID" id="66898078"/>
<dbReference type="KEGG" id="stl:stu0132"/>
<dbReference type="eggNOG" id="COG0544">
    <property type="taxonomic scope" value="Bacteria"/>
</dbReference>
<dbReference type="HOGENOM" id="CLU_033058_3_2_9"/>
<dbReference type="Proteomes" id="UP000001170">
    <property type="component" value="Chromosome"/>
</dbReference>
<dbReference type="GO" id="GO:0005737">
    <property type="term" value="C:cytoplasm"/>
    <property type="evidence" value="ECO:0007669"/>
    <property type="project" value="UniProtKB-SubCell"/>
</dbReference>
<dbReference type="GO" id="GO:0003755">
    <property type="term" value="F:peptidyl-prolyl cis-trans isomerase activity"/>
    <property type="evidence" value="ECO:0007669"/>
    <property type="project" value="UniProtKB-UniRule"/>
</dbReference>
<dbReference type="GO" id="GO:0044183">
    <property type="term" value="F:protein folding chaperone"/>
    <property type="evidence" value="ECO:0007669"/>
    <property type="project" value="TreeGrafter"/>
</dbReference>
<dbReference type="GO" id="GO:0043022">
    <property type="term" value="F:ribosome binding"/>
    <property type="evidence" value="ECO:0007669"/>
    <property type="project" value="TreeGrafter"/>
</dbReference>
<dbReference type="GO" id="GO:0051083">
    <property type="term" value="P:'de novo' cotranslational protein folding"/>
    <property type="evidence" value="ECO:0007669"/>
    <property type="project" value="TreeGrafter"/>
</dbReference>
<dbReference type="GO" id="GO:0051301">
    <property type="term" value="P:cell division"/>
    <property type="evidence" value="ECO:0007669"/>
    <property type="project" value="UniProtKB-KW"/>
</dbReference>
<dbReference type="GO" id="GO:0061077">
    <property type="term" value="P:chaperone-mediated protein folding"/>
    <property type="evidence" value="ECO:0007669"/>
    <property type="project" value="TreeGrafter"/>
</dbReference>
<dbReference type="GO" id="GO:0015031">
    <property type="term" value="P:protein transport"/>
    <property type="evidence" value="ECO:0007669"/>
    <property type="project" value="UniProtKB-UniRule"/>
</dbReference>
<dbReference type="GO" id="GO:0043335">
    <property type="term" value="P:protein unfolding"/>
    <property type="evidence" value="ECO:0007669"/>
    <property type="project" value="TreeGrafter"/>
</dbReference>
<dbReference type="FunFam" id="3.10.50.40:FF:000001">
    <property type="entry name" value="Trigger factor"/>
    <property type="match status" value="1"/>
</dbReference>
<dbReference type="Gene3D" id="3.10.50.40">
    <property type="match status" value="1"/>
</dbReference>
<dbReference type="Gene3D" id="3.30.70.1050">
    <property type="entry name" value="Trigger factor ribosome-binding domain"/>
    <property type="match status" value="1"/>
</dbReference>
<dbReference type="Gene3D" id="1.10.3120.10">
    <property type="entry name" value="Trigger factor, C-terminal domain"/>
    <property type="match status" value="1"/>
</dbReference>
<dbReference type="HAMAP" id="MF_00303">
    <property type="entry name" value="Trigger_factor_Tig"/>
    <property type="match status" value="1"/>
</dbReference>
<dbReference type="InterPro" id="IPR046357">
    <property type="entry name" value="PPIase_dom_sf"/>
</dbReference>
<dbReference type="InterPro" id="IPR001179">
    <property type="entry name" value="PPIase_FKBP_dom"/>
</dbReference>
<dbReference type="InterPro" id="IPR005215">
    <property type="entry name" value="Trig_fac"/>
</dbReference>
<dbReference type="InterPro" id="IPR008880">
    <property type="entry name" value="Trigger_fac_C"/>
</dbReference>
<dbReference type="InterPro" id="IPR037041">
    <property type="entry name" value="Trigger_fac_C_sf"/>
</dbReference>
<dbReference type="InterPro" id="IPR008881">
    <property type="entry name" value="Trigger_fac_ribosome-bd_bac"/>
</dbReference>
<dbReference type="InterPro" id="IPR036611">
    <property type="entry name" value="Trigger_fac_ribosome-bd_sf"/>
</dbReference>
<dbReference type="InterPro" id="IPR027304">
    <property type="entry name" value="Trigger_fact/SurA_dom_sf"/>
</dbReference>
<dbReference type="NCBIfam" id="TIGR00115">
    <property type="entry name" value="tig"/>
    <property type="match status" value="1"/>
</dbReference>
<dbReference type="PANTHER" id="PTHR30560">
    <property type="entry name" value="TRIGGER FACTOR CHAPERONE AND PEPTIDYL-PROLYL CIS/TRANS ISOMERASE"/>
    <property type="match status" value="1"/>
</dbReference>
<dbReference type="PANTHER" id="PTHR30560:SF3">
    <property type="entry name" value="TRIGGER FACTOR-LIKE PROTEIN TIG, CHLOROPLASTIC"/>
    <property type="match status" value="1"/>
</dbReference>
<dbReference type="Pfam" id="PF00254">
    <property type="entry name" value="FKBP_C"/>
    <property type="match status" value="1"/>
</dbReference>
<dbReference type="Pfam" id="PF05698">
    <property type="entry name" value="Trigger_C"/>
    <property type="match status" value="1"/>
</dbReference>
<dbReference type="Pfam" id="PF05697">
    <property type="entry name" value="Trigger_N"/>
    <property type="match status" value="1"/>
</dbReference>
<dbReference type="PIRSF" id="PIRSF003095">
    <property type="entry name" value="Trigger_factor"/>
    <property type="match status" value="1"/>
</dbReference>
<dbReference type="SUPFAM" id="SSF54534">
    <property type="entry name" value="FKBP-like"/>
    <property type="match status" value="1"/>
</dbReference>
<dbReference type="SUPFAM" id="SSF109998">
    <property type="entry name" value="Triger factor/SurA peptide-binding domain-like"/>
    <property type="match status" value="1"/>
</dbReference>
<dbReference type="SUPFAM" id="SSF102735">
    <property type="entry name" value="Trigger factor ribosome-binding domain"/>
    <property type="match status" value="1"/>
</dbReference>
<dbReference type="PROSITE" id="PS50059">
    <property type="entry name" value="FKBP_PPIASE"/>
    <property type="match status" value="1"/>
</dbReference>
<keyword id="KW-0131">Cell cycle</keyword>
<keyword id="KW-0132">Cell division</keyword>
<keyword id="KW-0143">Chaperone</keyword>
<keyword id="KW-0963">Cytoplasm</keyword>
<keyword id="KW-0413">Isomerase</keyword>
<keyword id="KW-1185">Reference proteome</keyword>
<keyword id="KW-0697">Rotamase</keyword>
<organism>
    <name type="scientific">Streptococcus thermophilus (strain ATCC BAA-250 / LMG 18311)</name>
    <dbReference type="NCBI Taxonomy" id="264199"/>
    <lineage>
        <taxon>Bacteria</taxon>
        <taxon>Bacillati</taxon>
        <taxon>Bacillota</taxon>
        <taxon>Bacilli</taxon>
        <taxon>Lactobacillales</taxon>
        <taxon>Streptococcaceae</taxon>
        <taxon>Streptococcus</taxon>
    </lineage>
</organism>
<protein>
    <recommendedName>
        <fullName evidence="1">Trigger factor</fullName>
        <shortName evidence="1">TF</shortName>
        <ecNumber evidence="1">5.2.1.8</ecNumber>
    </recommendedName>
    <alternativeName>
        <fullName evidence="1">PPIase</fullName>
    </alternativeName>
</protein>
<evidence type="ECO:0000255" key="1">
    <source>
        <dbReference type="HAMAP-Rule" id="MF_00303"/>
    </source>
</evidence>
<gene>
    <name evidence="1" type="primary">tig</name>
    <name type="ordered locus">stu0132</name>
</gene>
<feature type="chain" id="PRO_0000179445" description="Trigger factor">
    <location>
        <begin position="1"/>
        <end position="427"/>
    </location>
</feature>
<feature type="domain" description="PPIase FKBP-type" evidence="1">
    <location>
        <begin position="163"/>
        <end position="248"/>
    </location>
</feature>
<name>TIG_STRT2</name>